<gene>
    <name evidence="1" type="primary">rplF</name>
    <name type="ordered locus">SAUSA300_2189</name>
</gene>
<organism>
    <name type="scientific">Staphylococcus aureus (strain USA300)</name>
    <dbReference type="NCBI Taxonomy" id="367830"/>
    <lineage>
        <taxon>Bacteria</taxon>
        <taxon>Bacillati</taxon>
        <taxon>Bacillota</taxon>
        <taxon>Bacilli</taxon>
        <taxon>Bacillales</taxon>
        <taxon>Staphylococcaceae</taxon>
        <taxon>Staphylococcus</taxon>
    </lineage>
</organism>
<feature type="chain" id="PRO_0000260939" description="Large ribosomal subunit protein uL6">
    <location>
        <begin position="1"/>
        <end position="178"/>
    </location>
</feature>
<comment type="function">
    <text evidence="1">This protein binds to the 23S rRNA, and is important in its secondary structure. It is located near the subunit interface in the base of the L7/L12 stalk, and near the tRNA binding site of the peptidyltransferase center.</text>
</comment>
<comment type="subunit">
    <text evidence="1">Part of the 50S ribosomal subunit.</text>
</comment>
<comment type="similarity">
    <text evidence="1">Belongs to the universal ribosomal protein uL6 family.</text>
</comment>
<keyword id="KW-0687">Ribonucleoprotein</keyword>
<keyword id="KW-0689">Ribosomal protein</keyword>
<keyword id="KW-0694">RNA-binding</keyword>
<keyword id="KW-0699">rRNA-binding</keyword>
<protein>
    <recommendedName>
        <fullName evidence="1">Large ribosomal subunit protein uL6</fullName>
    </recommendedName>
    <alternativeName>
        <fullName evidence="2">50S ribosomal protein L6</fullName>
    </alternativeName>
</protein>
<accession>Q2FEQ4</accession>
<sequence>MSRVGKKIIDIPSDVTVTFDGNHVTVKGPKGELSRTLNERMTFKQEENTIEVVRPSDSKEDRTNHGTTRALLNNMVQGVSQGYVKVLELVGVGYRAQMQGKDLILNVGYSHPVEIKAEENITFSVEKNTVVKVEGISKEQVGALASNIRSVRPPEPYKGKGIRYQGEYVRRKEGKTGK</sequence>
<reference key="1">
    <citation type="journal article" date="2006" name="Lancet">
        <title>Complete genome sequence of USA300, an epidemic clone of community-acquired meticillin-resistant Staphylococcus aureus.</title>
        <authorList>
            <person name="Diep B.A."/>
            <person name="Gill S.R."/>
            <person name="Chang R.F."/>
            <person name="Phan T.H."/>
            <person name="Chen J.H."/>
            <person name="Davidson M.G."/>
            <person name="Lin F."/>
            <person name="Lin J."/>
            <person name="Carleton H.A."/>
            <person name="Mongodin E.F."/>
            <person name="Sensabaugh G.F."/>
            <person name="Perdreau-Remington F."/>
        </authorList>
    </citation>
    <scope>NUCLEOTIDE SEQUENCE [LARGE SCALE GENOMIC DNA]</scope>
    <source>
        <strain>USA300</strain>
    </source>
</reference>
<proteinExistence type="inferred from homology"/>
<dbReference type="EMBL" id="CP000255">
    <property type="protein sequence ID" value="ABD21423.1"/>
    <property type="molecule type" value="Genomic_DNA"/>
</dbReference>
<dbReference type="RefSeq" id="WP_000091975.1">
    <property type="nucleotide sequence ID" value="NZ_CP027476.1"/>
</dbReference>
<dbReference type="SMR" id="Q2FEQ4"/>
<dbReference type="KEGG" id="saa:SAUSA300_2189"/>
<dbReference type="HOGENOM" id="CLU_065464_1_2_9"/>
<dbReference type="OMA" id="RERHGLC"/>
<dbReference type="Proteomes" id="UP000001939">
    <property type="component" value="Chromosome"/>
</dbReference>
<dbReference type="GO" id="GO:0022625">
    <property type="term" value="C:cytosolic large ribosomal subunit"/>
    <property type="evidence" value="ECO:0007669"/>
    <property type="project" value="TreeGrafter"/>
</dbReference>
<dbReference type="GO" id="GO:0019843">
    <property type="term" value="F:rRNA binding"/>
    <property type="evidence" value="ECO:0007669"/>
    <property type="project" value="UniProtKB-UniRule"/>
</dbReference>
<dbReference type="GO" id="GO:0003735">
    <property type="term" value="F:structural constituent of ribosome"/>
    <property type="evidence" value="ECO:0007669"/>
    <property type="project" value="InterPro"/>
</dbReference>
<dbReference type="GO" id="GO:0002181">
    <property type="term" value="P:cytoplasmic translation"/>
    <property type="evidence" value="ECO:0007669"/>
    <property type="project" value="TreeGrafter"/>
</dbReference>
<dbReference type="FunFam" id="3.90.930.12:FF:000001">
    <property type="entry name" value="50S ribosomal protein L6"/>
    <property type="match status" value="1"/>
</dbReference>
<dbReference type="FunFam" id="3.90.930.12:FF:000002">
    <property type="entry name" value="50S ribosomal protein L6"/>
    <property type="match status" value="1"/>
</dbReference>
<dbReference type="Gene3D" id="3.90.930.12">
    <property type="entry name" value="Ribosomal protein L6, alpha-beta domain"/>
    <property type="match status" value="2"/>
</dbReference>
<dbReference type="HAMAP" id="MF_01365_B">
    <property type="entry name" value="Ribosomal_uL6_B"/>
    <property type="match status" value="1"/>
</dbReference>
<dbReference type="InterPro" id="IPR000702">
    <property type="entry name" value="Ribosomal_uL6-like"/>
</dbReference>
<dbReference type="InterPro" id="IPR036789">
    <property type="entry name" value="Ribosomal_uL6-like_a/b-dom_sf"/>
</dbReference>
<dbReference type="InterPro" id="IPR020040">
    <property type="entry name" value="Ribosomal_uL6_a/b-dom"/>
</dbReference>
<dbReference type="InterPro" id="IPR019906">
    <property type="entry name" value="Ribosomal_uL6_bac-type"/>
</dbReference>
<dbReference type="InterPro" id="IPR002358">
    <property type="entry name" value="Ribosomal_uL6_CS"/>
</dbReference>
<dbReference type="NCBIfam" id="TIGR03654">
    <property type="entry name" value="L6_bact"/>
    <property type="match status" value="1"/>
</dbReference>
<dbReference type="PANTHER" id="PTHR11655">
    <property type="entry name" value="60S/50S RIBOSOMAL PROTEIN L6/L9"/>
    <property type="match status" value="1"/>
</dbReference>
<dbReference type="PANTHER" id="PTHR11655:SF14">
    <property type="entry name" value="LARGE RIBOSOMAL SUBUNIT PROTEIN UL6M"/>
    <property type="match status" value="1"/>
</dbReference>
<dbReference type="Pfam" id="PF00347">
    <property type="entry name" value="Ribosomal_L6"/>
    <property type="match status" value="2"/>
</dbReference>
<dbReference type="PIRSF" id="PIRSF002162">
    <property type="entry name" value="Ribosomal_L6"/>
    <property type="match status" value="1"/>
</dbReference>
<dbReference type="PRINTS" id="PR00059">
    <property type="entry name" value="RIBOSOMALL6"/>
</dbReference>
<dbReference type="SUPFAM" id="SSF56053">
    <property type="entry name" value="Ribosomal protein L6"/>
    <property type="match status" value="2"/>
</dbReference>
<dbReference type="PROSITE" id="PS00525">
    <property type="entry name" value="RIBOSOMAL_L6_1"/>
    <property type="match status" value="1"/>
</dbReference>
<name>RL6_STAA3</name>
<evidence type="ECO:0000255" key="1">
    <source>
        <dbReference type="HAMAP-Rule" id="MF_01365"/>
    </source>
</evidence>
<evidence type="ECO:0000305" key="2"/>